<feature type="chain" id="PRO_1000123253" description="Putative [LysW]-L-2-aminoadipate 6-phosphate reductase">
    <location>
        <begin position="1"/>
        <end position="352"/>
    </location>
</feature>
<feature type="active site" evidence="1">
    <location>
        <position position="148"/>
    </location>
</feature>
<feature type="binding site" evidence="1">
    <location>
        <begin position="11"/>
        <end position="14"/>
    </location>
    <ligand>
        <name>NADP(+)</name>
        <dbReference type="ChEBI" id="CHEBI:58349"/>
    </ligand>
</feature>
<feature type="binding site" evidence="1">
    <location>
        <position position="319"/>
    </location>
    <ligand>
        <name>NADP(+)</name>
        <dbReference type="ChEBI" id="CHEBI:58349"/>
    </ligand>
</feature>
<organism>
    <name type="scientific">Thermomicrobium roseum (strain ATCC 27502 / DSM 5159 / P-2)</name>
    <dbReference type="NCBI Taxonomy" id="309801"/>
    <lineage>
        <taxon>Bacteria</taxon>
        <taxon>Pseudomonadati</taxon>
        <taxon>Thermomicrobiota</taxon>
        <taxon>Thermomicrobia</taxon>
        <taxon>Thermomicrobiales</taxon>
        <taxon>Thermomicrobiaceae</taxon>
        <taxon>Thermomicrobium</taxon>
    </lineage>
</organism>
<proteinExistence type="inferred from homology"/>
<gene>
    <name evidence="1" type="primary">lysY</name>
    <name type="synonym">argC</name>
    <name type="ordered locus">trd_1518</name>
</gene>
<protein>
    <recommendedName>
        <fullName evidence="1">Putative [LysW]-L-2-aminoadipate 6-phosphate reductase</fullName>
        <ecNumber evidence="1">1.2.1.103</ecNumber>
    </recommendedName>
</protein>
<name>LYSY_THERP</name>
<sequence>MVVSVAILGGSGYTGGELLRLLLSHPEVEVKQVTSRSRAGKFVHTVHPNLRKRTALKFVPPEALEPVDLLFACLPHGETAPIVDRLLELAPIVIDLSADFRLRDPAAYEQWYHWTHPRPDLLAQAVYGLPELHREEIRNARYIACPGCNSTTVILGLAPLFRAGLIDLDLPVTVECKVGSSGAGGEAGPASHHPERSGVIRPFKPGGHRHTAEVLQELTVCGRTPSLGLSVTSVEAVRGILATAHLFPKQPLTDRDLWQVYRAAYGQEPFIRLVKEASGIHRYPEPKILAGSNYCDIGWELDELPGGRQRLVVMSAIDNLMKGAAGQAVQAMNIRLGFPETLGLEFPGLHPL</sequence>
<comment type="function">
    <text evidence="1">Catalyzes the NADPH-dependent reduction of [LysW]-aminoadipate 6-phosphate to yield [LysW]-aminoadipate 6-semialdehyde.</text>
</comment>
<comment type="catalytic activity">
    <reaction evidence="1">
        <text>[amino-group carrier protein]-C-terminal-N-(1-carboxy-5-oxopentan-1-yl)-L-glutamine + phosphate + NADP(+) = [amino-group carrier protein]-C-terminal-N-(1-carboxy-5-phosphooxy-5-oxopentan-1-yl)-L-glutamine + NADPH + H(+)</text>
        <dbReference type="Rhea" id="RHEA:41948"/>
        <dbReference type="Rhea" id="RHEA-COMP:9712"/>
        <dbReference type="Rhea" id="RHEA-COMP:9714"/>
        <dbReference type="ChEBI" id="CHEBI:15378"/>
        <dbReference type="ChEBI" id="CHEBI:43474"/>
        <dbReference type="ChEBI" id="CHEBI:57783"/>
        <dbReference type="ChEBI" id="CHEBI:58349"/>
        <dbReference type="ChEBI" id="CHEBI:78499"/>
        <dbReference type="ChEBI" id="CHEBI:78501"/>
        <dbReference type="EC" id="1.2.1.103"/>
    </reaction>
</comment>
<comment type="pathway">
    <text evidence="1">Amino-acid biosynthesis; L-lysine biosynthesis via AAA pathway; L-lysine from L-alpha-aminoadipate (Thermus route): step 3/5.</text>
</comment>
<comment type="subcellular location">
    <subcellularLocation>
        <location evidence="1">Cytoplasm</location>
    </subcellularLocation>
</comment>
<comment type="similarity">
    <text evidence="1">Belongs to the NAGSA dehydrogenase family. Type 1 subfamily. LysY sub-subfamily.</text>
</comment>
<keyword id="KW-0028">Amino-acid biosynthesis</keyword>
<keyword id="KW-0963">Cytoplasm</keyword>
<keyword id="KW-0457">Lysine biosynthesis</keyword>
<keyword id="KW-0521">NADP</keyword>
<keyword id="KW-0560">Oxidoreductase</keyword>
<keyword id="KW-1185">Reference proteome</keyword>
<accession>B9KZP8</accession>
<evidence type="ECO:0000255" key="1">
    <source>
        <dbReference type="HAMAP-Rule" id="MF_02083"/>
    </source>
</evidence>
<dbReference type="EC" id="1.2.1.103" evidence="1"/>
<dbReference type="EMBL" id="CP001275">
    <property type="protein sequence ID" value="ACM05243.1"/>
    <property type="molecule type" value="Genomic_DNA"/>
</dbReference>
<dbReference type="RefSeq" id="WP_015922465.1">
    <property type="nucleotide sequence ID" value="NC_011959.1"/>
</dbReference>
<dbReference type="SMR" id="B9KZP8"/>
<dbReference type="STRING" id="309801.trd_1518"/>
<dbReference type="KEGG" id="tro:trd_1518"/>
<dbReference type="eggNOG" id="COG0002">
    <property type="taxonomic scope" value="Bacteria"/>
</dbReference>
<dbReference type="HOGENOM" id="CLU_006384_0_1_0"/>
<dbReference type="OrthoDB" id="9801289at2"/>
<dbReference type="UniPathway" id="UPA00033">
    <property type="reaction ID" value="UER00037"/>
</dbReference>
<dbReference type="Proteomes" id="UP000000447">
    <property type="component" value="Chromosome"/>
</dbReference>
<dbReference type="GO" id="GO:0005737">
    <property type="term" value="C:cytoplasm"/>
    <property type="evidence" value="ECO:0007669"/>
    <property type="project" value="UniProtKB-SubCell"/>
</dbReference>
<dbReference type="GO" id="GO:0043870">
    <property type="term" value="F:N-acetyl-gamma-aminoadipyl-phosphate reductase activity"/>
    <property type="evidence" value="ECO:0007669"/>
    <property type="project" value="RHEA"/>
</dbReference>
<dbReference type="GO" id="GO:0003942">
    <property type="term" value="F:N-acetyl-gamma-glutamyl-phosphate reductase activity"/>
    <property type="evidence" value="ECO:0007669"/>
    <property type="project" value="InterPro"/>
</dbReference>
<dbReference type="GO" id="GO:0051287">
    <property type="term" value="F:NAD binding"/>
    <property type="evidence" value="ECO:0007669"/>
    <property type="project" value="InterPro"/>
</dbReference>
<dbReference type="GO" id="GO:0070401">
    <property type="term" value="F:NADP+ binding"/>
    <property type="evidence" value="ECO:0007669"/>
    <property type="project" value="InterPro"/>
</dbReference>
<dbReference type="GO" id="GO:0006526">
    <property type="term" value="P:L-arginine biosynthetic process"/>
    <property type="evidence" value="ECO:0007669"/>
    <property type="project" value="InterPro"/>
</dbReference>
<dbReference type="GO" id="GO:0019878">
    <property type="term" value="P:lysine biosynthetic process via aminoadipic acid"/>
    <property type="evidence" value="ECO:0007669"/>
    <property type="project" value="UniProtKB-UniPathway"/>
</dbReference>
<dbReference type="CDD" id="cd23939">
    <property type="entry name" value="AGPR_1_C_LysY"/>
    <property type="match status" value="1"/>
</dbReference>
<dbReference type="CDD" id="cd24151">
    <property type="entry name" value="AGPR_1_N_LysY"/>
    <property type="match status" value="1"/>
</dbReference>
<dbReference type="Gene3D" id="3.30.360.10">
    <property type="entry name" value="Dihydrodipicolinate Reductase, domain 2"/>
    <property type="match status" value="1"/>
</dbReference>
<dbReference type="Gene3D" id="3.40.50.720">
    <property type="entry name" value="NAD(P)-binding Rossmann-like Domain"/>
    <property type="match status" value="1"/>
</dbReference>
<dbReference type="HAMAP" id="MF_00150">
    <property type="entry name" value="ArgC_type1"/>
    <property type="match status" value="1"/>
</dbReference>
<dbReference type="HAMAP" id="MF_02083">
    <property type="entry name" value="LysY"/>
    <property type="match status" value="1"/>
</dbReference>
<dbReference type="InterPro" id="IPR023013">
    <property type="entry name" value="AGPR_AS"/>
</dbReference>
<dbReference type="InterPro" id="IPR000706">
    <property type="entry name" value="AGPR_type-1"/>
</dbReference>
<dbReference type="InterPro" id="IPR037535">
    <property type="entry name" value="LysY"/>
</dbReference>
<dbReference type="InterPro" id="IPR036291">
    <property type="entry name" value="NAD(P)-bd_dom_sf"/>
</dbReference>
<dbReference type="InterPro" id="IPR050085">
    <property type="entry name" value="NAGSA_dehydrogenase"/>
</dbReference>
<dbReference type="InterPro" id="IPR000534">
    <property type="entry name" value="Semialdehyde_DH_NAD-bd"/>
</dbReference>
<dbReference type="NCBIfam" id="TIGR01850">
    <property type="entry name" value="argC"/>
    <property type="match status" value="1"/>
</dbReference>
<dbReference type="PANTHER" id="PTHR32338:SF11">
    <property type="entry name" value="[LYSW]-L-2-AMINOADIPATE_[LYSW]-L-GLUTAMATE PHOSPHATE REDUCTASE-RELATED"/>
    <property type="match status" value="1"/>
</dbReference>
<dbReference type="PANTHER" id="PTHR32338">
    <property type="entry name" value="N-ACETYL-GAMMA-GLUTAMYL-PHOSPHATE REDUCTASE, CHLOROPLASTIC-RELATED-RELATED"/>
    <property type="match status" value="1"/>
</dbReference>
<dbReference type="Pfam" id="PF01118">
    <property type="entry name" value="Semialdhyde_dh"/>
    <property type="match status" value="1"/>
</dbReference>
<dbReference type="Pfam" id="PF22698">
    <property type="entry name" value="Semialdhyde_dhC_1"/>
    <property type="match status" value="1"/>
</dbReference>
<dbReference type="SMART" id="SM00859">
    <property type="entry name" value="Semialdhyde_dh"/>
    <property type="match status" value="1"/>
</dbReference>
<dbReference type="SUPFAM" id="SSF55347">
    <property type="entry name" value="Glyceraldehyde-3-phosphate dehydrogenase-like, C-terminal domain"/>
    <property type="match status" value="1"/>
</dbReference>
<dbReference type="SUPFAM" id="SSF51735">
    <property type="entry name" value="NAD(P)-binding Rossmann-fold domains"/>
    <property type="match status" value="1"/>
</dbReference>
<dbReference type="PROSITE" id="PS01224">
    <property type="entry name" value="ARGC"/>
    <property type="match status" value="1"/>
</dbReference>
<reference key="1">
    <citation type="journal article" date="2009" name="PLoS ONE">
        <title>Complete genome sequence of the aerobic CO-oxidizing thermophile Thermomicrobium roseum.</title>
        <authorList>
            <person name="Wu D."/>
            <person name="Raymond J."/>
            <person name="Wu M."/>
            <person name="Chatterji S."/>
            <person name="Ren Q."/>
            <person name="Graham J.E."/>
            <person name="Bryant D.A."/>
            <person name="Robb F."/>
            <person name="Colman A."/>
            <person name="Tallon L.J."/>
            <person name="Badger J.H."/>
            <person name="Madupu R."/>
            <person name="Ward N.L."/>
            <person name="Eisen J.A."/>
        </authorList>
    </citation>
    <scope>NUCLEOTIDE SEQUENCE [LARGE SCALE GENOMIC DNA]</scope>
    <source>
        <strain>ATCC 27502 / DSM 5159 / P-2</strain>
    </source>
</reference>